<feature type="chain" id="PRO_1000018924" description="Bifunctional purine biosynthesis protein PurH">
    <location>
        <begin position="1"/>
        <end position="529"/>
    </location>
</feature>
<feature type="domain" description="MGS-like" evidence="2">
    <location>
        <begin position="2"/>
        <end position="148"/>
    </location>
</feature>
<comment type="catalytic activity">
    <reaction evidence="1">
        <text>(6R)-10-formyltetrahydrofolate + 5-amino-1-(5-phospho-beta-D-ribosyl)imidazole-4-carboxamide = 5-formamido-1-(5-phospho-D-ribosyl)imidazole-4-carboxamide + (6S)-5,6,7,8-tetrahydrofolate</text>
        <dbReference type="Rhea" id="RHEA:22192"/>
        <dbReference type="ChEBI" id="CHEBI:57453"/>
        <dbReference type="ChEBI" id="CHEBI:58467"/>
        <dbReference type="ChEBI" id="CHEBI:58475"/>
        <dbReference type="ChEBI" id="CHEBI:195366"/>
        <dbReference type="EC" id="2.1.2.3"/>
    </reaction>
</comment>
<comment type="catalytic activity">
    <reaction evidence="1">
        <text>IMP + H2O = 5-formamido-1-(5-phospho-D-ribosyl)imidazole-4-carboxamide</text>
        <dbReference type="Rhea" id="RHEA:18445"/>
        <dbReference type="ChEBI" id="CHEBI:15377"/>
        <dbReference type="ChEBI" id="CHEBI:58053"/>
        <dbReference type="ChEBI" id="CHEBI:58467"/>
        <dbReference type="EC" id="3.5.4.10"/>
    </reaction>
</comment>
<comment type="pathway">
    <text evidence="1">Purine metabolism; IMP biosynthesis via de novo pathway; 5-formamido-1-(5-phospho-D-ribosyl)imidazole-4-carboxamide from 5-amino-1-(5-phospho-D-ribosyl)imidazole-4-carboxamide (10-formyl THF route): step 1/1.</text>
</comment>
<comment type="pathway">
    <text evidence="1">Purine metabolism; IMP biosynthesis via de novo pathway; IMP from 5-formamido-1-(5-phospho-D-ribosyl)imidazole-4-carboxamide: step 1/1.</text>
</comment>
<comment type="domain">
    <text evidence="1">The IMP cyclohydrolase activity resides in the N-terminal region.</text>
</comment>
<comment type="similarity">
    <text evidence="1">Belongs to the PurH family.</text>
</comment>
<dbReference type="EC" id="2.1.2.3" evidence="1"/>
<dbReference type="EC" id="3.5.4.10" evidence="1"/>
<dbReference type="EMBL" id="BX571860">
    <property type="protein sequence ID" value="CAE12790.1"/>
    <property type="molecule type" value="Genomic_DNA"/>
</dbReference>
<dbReference type="RefSeq" id="WP_011144880.1">
    <property type="nucleotide sequence ID" value="NC_005126.1"/>
</dbReference>
<dbReference type="SMR" id="Q7N954"/>
<dbReference type="STRING" id="243265.plu0495"/>
<dbReference type="GeneID" id="48846780"/>
<dbReference type="KEGG" id="plu:plu0495"/>
<dbReference type="eggNOG" id="COG0138">
    <property type="taxonomic scope" value="Bacteria"/>
</dbReference>
<dbReference type="HOGENOM" id="CLU_016316_5_2_6"/>
<dbReference type="OrthoDB" id="9802065at2"/>
<dbReference type="UniPathway" id="UPA00074">
    <property type="reaction ID" value="UER00133"/>
</dbReference>
<dbReference type="UniPathway" id="UPA00074">
    <property type="reaction ID" value="UER00135"/>
</dbReference>
<dbReference type="Proteomes" id="UP000002514">
    <property type="component" value="Chromosome"/>
</dbReference>
<dbReference type="GO" id="GO:0005829">
    <property type="term" value="C:cytosol"/>
    <property type="evidence" value="ECO:0007669"/>
    <property type="project" value="TreeGrafter"/>
</dbReference>
<dbReference type="GO" id="GO:0003937">
    <property type="term" value="F:IMP cyclohydrolase activity"/>
    <property type="evidence" value="ECO:0007669"/>
    <property type="project" value="UniProtKB-UniRule"/>
</dbReference>
<dbReference type="GO" id="GO:0004643">
    <property type="term" value="F:phosphoribosylaminoimidazolecarboxamide formyltransferase activity"/>
    <property type="evidence" value="ECO:0007669"/>
    <property type="project" value="UniProtKB-UniRule"/>
</dbReference>
<dbReference type="GO" id="GO:0006189">
    <property type="term" value="P:'de novo' IMP biosynthetic process"/>
    <property type="evidence" value="ECO:0007669"/>
    <property type="project" value="UniProtKB-UniRule"/>
</dbReference>
<dbReference type="CDD" id="cd01421">
    <property type="entry name" value="IMPCH"/>
    <property type="match status" value="1"/>
</dbReference>
<dbReference type="FunFam" id="3.40.140.20:FF:000001">
    <property type="entry name" value="Bifunctional purine biosynthesis protein PurH"/>
    <property type="match status" value="1"/>
</dbReference>
<dbReference type="FunFam" id="3.40.140.20:FF:000002">
    <property type="entry name" value="Bifunctional purine biosynthesis protein PurH"/>
    <property type="match status" value="1"/>
</dbReference>
<dbReference type="FunFam" id="3.40.50.1380:FF:000001">
    <property type="entry name" value="Bifunctional purine biosynthesis protein PurH"/>
    <property type="match status" value="1"/>
</dbReference>
<dbReference type="Gene3D" id="3.40.140.20">
    <property type="match status" value="2"/>
</dbReference>
<dbReference type="Gene3D" id="3.40.50.1380">
    <property type="entry name" value="Methylglyoxal synthase-like domain"/>
    <property type="match status" value="1"/>
</dbReference>
<dbReference type="HAMAP" id="MF_00139">
    <property type="entry name" value="PurH"/>
    <property type="match status" value="1"/>
</dbReference>
<dbReference type="InterPro" id="IPR024051">
    <property type="entry name" value="AICAR_Tfase_dup_dom_sf"/>
</dbReference>
<dbReference type="InterPro" id="IPR016193">
    <property type="entry name" value="Cytidine_deaminase-like"/>
</dbReference>
<dbReference type="InterPro" id="IPR011607">
    <property type="entry name" value="MGS-like_dom"/>
</dbReference>
<dbReference type="InterPro" id="IPR036914">
    <property type="entry name" value="MGS-like_dom_sf"/>
</dbReference>
<dbReference type="InterPro" id="IPR002695">
    <property type="entry name" value="PurH-like"/>
</dbReference>
<dbReference type="NCBIfam" id="NF002049">
    <property type="entry name" value="PRK00881.1"/>
    <property type="match status" value="1"/>
</dbReference>
<dbReference type="NCBIfam" id="TIGR00355">
    <property type="entry name" value="purH"/>
    <property type="match status" value="1"/>
</dbReference>
<dbReference type="PANTHER" id="PTHR11692:SF0">
    <property type="entry name" value="BIFUNCTIONAL PURINE BIOSYNTHESIS PROTEIN ATIC"/>
    <property type="match status" value="1"/>
</dbReference>
<dbReference type="PANTHER" id="PTHR11692">
    <property type="entry name" value="BIFUNCTIONAL PURINE BIOSYNTHESIS PROTEIN PURH"/>
    <property type="match status" value="1"/>
</dbReference>
<dbReference type="Pfam" id="PF01808">
    <property type="entry name" value="AICARFT_IMPCHas"/>
    <property type="match status" value="1"/>
</dbReference>
<dbReference type="Pfam" id="PF02142">
    <property type="entry name" value="MGS"/>
    <property type="match status" value="1"/>
</dbReference>
<dbReference type="PIRSF" id="PIRSF000414">
    <property type="entry name" value="AICARFT_IMPCHas"/>
    <property type="match status" value="1"/>
</dbReference>
<dbReference type="SMART" id="SM00798">
    <property type="entry name" value="AICARFT_IMPCHas"/>
    <property type="match status" value="1"/>
</dbReference>
<dbReference type="SMART" id="SM00851">
    <property type="entry name" value="MGS"/>
    <property type="match status" value="1"/>
</dbReference>
<dbReference type="SUPFAM" id="SSF53927">
    <property type="entry name" value="Cytidine deaminase-like"/>
    <property type="match status" value="1"/>
</dbReference>
<dbReference type="SUPFAM" id="SSF52335">
    <property type="entry name" value="Methylglyoxal synthase-like"/>
    <property type="match status" value="1"/>
</dbReference>
<dbReference type="PROSITE" id="PS51855">
    <property type="entry name" value="MGS"/>
    <property type="match status" value="1"/>
</dbReference>
<evidence type="ECO:0000255" key="1">
    <source>
        <dbReference type="HAMAP-Rule" id="MF_00139"/>
    </source>
</evidence>
<evidence type="ECO:0000255" key="2">
    <source>
        <dbReference type="PROSITE-ProRule" id="PRU01202"/>
    </source>
</evidence>
<organism>
    <name type="scientific">Photorhabdus laumondii subsp. laumondii (strain DSM 15139 / CIP 105565 / TT01)</name>
    <name type="common">Photorhabdus luminescens subsp. laumondii</name>
    <dbReference type="NCBI Taxonomy" id="243265"/>
    <lineage>
        <taxon>Bacteria</taxon>
        <taxon>Pseudomonadati</taxon>
        <taxon>Pseudomonadota</taxon>
        <taxon>Gammaproteobacteria</taxon>
        <taxon>Enterobacterales</taxon>
        <taxon>Morganellaceae</taxon>
        <taxon>Photorhabdus</taxon>
    </lineage>
</organism>
<proteinExistence type="inferred from homology"/>
<sequence>MQQLRPIHRALLSVSDKSGVVEFAKALSQRGVELLSTGGTARLLAESDLKVTEVSDYTGFPEMMDGRVKTLHPKVHGGILGRRGQDDEIMAQHQISPIDMVVVNLYPFAQTVAKPDCTLADAVENIDIGGPTMVRSAAKNHKDVAIVVNSKDYKKIIEEMDNNQGSLTQSTRFDLAIKAFEHTAAYDSMIANYFGKLVPPYHGDTTQPSGRFPRTLNLNFIKKQDMRYGENSHQDAAFYIEENLSESSIATATQLQGKALSYNNIADTDAALECVKEFVEPACVIVKHANPCGVAIGKDIHEAYDSAFKTDPTSAFGGIIAFNRELDIKTAQAIIDRQFVEVIIAPSVNKDVLPVLATKQNIRVLVCGEWEDRAAGLDFKRVNGGLLVQDRDLGMVAVTNLRVVSKRHPTEQEMKDALFCWKVAKFVKSNAIVYAKNDMTIGIGAGQMSRVYSAKIAGIKAADEGLEVQGCAMASDAFFPFRDGIDAAAAVGVSCIIQPGGSIRDDEVITAADEHGIAMIFTGMRHFRH</sequence>
<name>PUR9_PHOLL</name>
<gene>
    <name evidence="1" type="primary">purH</name>
    <name type="ordered locus">plu0495</name>
</gene>
<keyword id="KW-0378">Hydrolase</keyword>
<keyword id="KW-0511">Multifunctional enzyme</keyword>
<keyword id="KW-0658">Purine biosynthesis</keyword>
<keyword id="KW-1185">Reference proteome</keyword>
<keyword id="KW-0808">Transferase</keyword>
<protein>
    <recommendedName>
        <fullName evidence="1">Bifunctional purine biosynthesis protein PurH</fullName>
    </recommendedName>
    <domain>
        <recommendedName>
            <fullName evidence="1">Phosphoribosylaminoimidazolecarboxamide formyltransferase</fullName>
            <ecNumber evidence="1">2.1.2.3</ecNumber>
        </recommendedName>
        <alternativeName>
            <fullName evidence="1">AICAR transformylase</fullName>
        </alternativeName>
    </domain>
    <domain>
        <recommendedName>
            <fullName evidence="1">IMP cyclohydrolase</fullName>
            <ecNumber evidence="1">3.5.4.10</ecNumber>
        </recommendedName>
        <alternativeName>
            <fullName evidence="1">ATIC</fullName>
        </alternativeName>
        <alternativeName>
            <fullName evidence="1">IMP synthase</fullName>
        </alternativeName>
        <alternativeName>
            <fullName evidence="1">Inosinicase</fullName>
        </alternativeName>
    </domain>
</protein>
<reference key="1">
    <citation type="journal article" date="2003" name="Nat. Biotechnol.">
        <title>The genome sequence of the entomopathogenic bacterium Photorhabdus luminescens.</title>
        <authorList>
            <person name="Duchaud E."/>
            <person name="Rusniok C."/>
            <person name="Frangeul L."/>
            <person name="Buchrieser C."/>
            <person name="Givaudan A."/>
            <person name="Taourit S."/>
            <person name="Bocs S."/>
            <person name="Boursaux-Eude C."/>
            <person name="Chandler M."/>
            <person name="Charles J.-F."/>
            <person name="Dassa E."/>
            <person name="Derose R."/>
            <person name="Derzelle S."/>
            <person name="Freyssinet G."/>
            <person name="Gaudriault S."/>
            <person name="Medigue C."/>
            <person name="Lanois A."/>
            <person name="Powell K."/>
            <person name="Siguier P."/>
            <person name="Vincent R."/>
            <person name="Wingate V."/>
            <person name="Zouine M."/>
            <person name="Glaser P."/>
            <person name="Boemare N."/>
            <person name="Danchin A."/>
            <person name="Kunst F."/>
        </authorList>
    </citation>
    <scope>NUCLEOTIDE SEQUENCE [LARGE SCALE GENOMIC DNA]</scope>
    <source>
        <strain>DSM 15139 / CIP 105565 / TT01</strain>
    </source>
</reference>
<accession>Q7N954</accession>